<sequence>MNTETTQDTTEAKLPGERLREARERLGLTQQTIAERLCLKITTVRDIEDGTTPADLAPTFLRGYIRSYAKLVHLPEDNLLPIMDKQAVPKAISVSPMQSFSLKKSRKKRDGWLMIITWLVVLVVLGLTGAWWWQNHQAQQAEINSMVDHASSMQSQTEGQSVPLMDNSAPQETSTAGSAATPPSTPVDLSATIAATPSTPPSSTTASSAAPSSQSPSQANATQSQAAGNALLGAGAVAPAATVADSNPVSAAHALVMTFTADCWLEVTDVSGKKLFSGMQRNGSTLNLDGQSPYQLKIGAPAAVQIKFQGKPVDLSRFVRSSQVARLTLTAE</sequence>
<dbReference type="EMBL" id="BX950851">
    <property type="protein sequence ID" value="CAG76119.1"/>
    <property type="molecule type" value="Genomic_DNA"/>
</dbReference>
<dbReference type="RefSeq" id="WP_011094742.1">
    <property type="nucleotide sequence ID" value="NC_004547.2"/>
</dbReference>
<dbReference type="SMR" id="Q6D275"/>
<dbReference type="STRING" id="218491.ECA3221"/>
<dbReference type="KEGG" id="eca:ECA3221"/>
<dbReference type="PATRIC" id="fig|218491.5.peg.3263"/>
<dbReference type="eggNOG" id="COG1426">
    <property type="taxonomic scope" value="Bacteria"/>
</dbReference>
<dbReference type="HOGENOM" id="CLU_047530_3_1_6"/>
<dbReference type="OrthoDB" id="9790252at2"/>
<dbReference type="Proteomes" id="UP000007966">
    <property type="component" value="Chromosome"/>
</dbReference>
<dbReference type="GO" id="GO:0005886">
    <property type="term" value="C:plasma membrane"/>
    <property type="evidence" value="ECO:0007669"/>
    <property type="project" value="UniProtKB-SubCell"/>
</dbReference>
<dbReference type="GO" id="GO:0003677">
    <property type="term" value="F:DNA binding"/>
    <property type="evidence" value="ECO:0007669"/>
    <property type="project" value="UniProtKB-KW"/>
</dbReference>
<dbReference type="GO" id="GO:0008360">
    <property type="term" value="P:regulation of cell shape"/>
    <property type="evidence" value="ECO:0007669"/>
    <property type="project" value="UniProtKB-UniRule"/>
</dbReference>
<dbReference type="CDD" id="cd00093">
    <property type="entry name" value="HTH_XRE"/>
    <property type="match status" value="1"/>
</dbReference>
<dbReference type="Gene3D" id="1.10.260.40">
    <property type="entry name" value="lambda repressor-like DNA-binding domains"/>
    <property type="match status" value="1"/>
</dbReference>
<dbReference type="HAMAP" id="MF_02017">
    <property type="entry name" value="RodZ"/>
    <property type="match status" value="1"/>
</dbReference>
<dbReference type="InterPro" id="IPR050400">
    <property type="entry name" value="Bact_Cytoskel_RodZ"/>
</dbReference>
<dbReference type="InterPro" id="IPR001387">
    <property type="entry name" value="Cro/C1-type_HTH"/>
</dbReference>
<dbReference type="InterPro" id="IPR010982">
    <property type="entry name" value="Lambda_DNA-bd_dom_sf"/>
</dbReference>
<dbReference type="InterPro" id="IPR023690">
    <property type="entry name" value="RodZ"/>
</dbReference>
<dbReference type="InterPro" id="IPR025194">
    <property type="entry name" value="RodZ-like_C"/>
</dbReference>
<dbReference type="NCBIfam" id="NF008109">
    <property type="entry name" value="PRK10856.1"/>
    <property type="match status" value="1"/>
</dbReference>
<dbReference type="PANTHER" id="PTHR34475">
    <property type="match status" value="1"/>
</dbReference>
<dbReference type="PANTHER" id="PTHR34475:SF1">
    <property type="entry name" value="CYTOSKELETON PROTEIN RODZ"/>
    <property type="match status" value="1"/>
</dbReference>
<dbReference type="Pfam" id="PF13413">
    <property type="entry name" value="HTH_25"/>
    <property type="match status" value="1"/>
</dbReference>
<dbReference type="Pfam" id="PF13464">
    <property type="entry name" value="RodZ_C"/>
    <property type="match status" value="1"/>
</dbReference>
<dbReference type="SMART" id="SM00530">
    <property type="entry name" value="HTH_XRE"/>
    <property type="match status" value="1"/>
</dbReference>
<dbReference type="SUPFAM" id="SSF47413">
    <property type="entry name" value="lambda repressor-like DNA-binding domains"/>
    <property type="match status" value="1"/>
</dbReference>
<dbReference type="PROSITE" id="PS50943">
    <property type="entry name" value="HTH_CROC1"/>
    <property type="match status" value="1"/>
</dbReference>
<gene>
    <name evidence="1" type="primary">rodZ</name>
    <name type="ordered locus">ECA3221</name>
</gene>
<feature type="chain" id="PRO_0000361832" description="Cytoskeleton protein RodZ">
    <location>
        <begin position="1"/>
        <end position="332"/>
    </location>
</feature>
<feature type="topological domain" description="Cytoplasmic" evidence="1">
    <location>
        <begin position="1"/>
        <end position="111"/>
    </location>
</feature>
<feature type="transmembrane region" description="Helical; Signal-anchor for type II membrane protein" evidence="1">
    <location>
        <begin position="112"/>
        <end position="132"/>
    </location>
</feature>
<feature type="topological domain" description="Periplasmic" evidence="1">
    <location>
        <begin position="133"/>
        <end position="332"/>
    </location>
</feature>
<feature type="domain" description="HTH cro/C1-type" evidence="1">
    <location>
        <begin position="19"/>
        <end position="71"/>
    </location>
</feature>
<feature type="DNA-binding region" description="H-T-H motif" evidence="1">
    <location>
        <begin position="30"/>
        <end position="49"/>
    </location>
</feature>
<feature type="region of interest" description="Disordered" evidence="2">
    <location>
        <begin position="149"/>
        <end position="225"/>
    </location>
</feature>
<feature type="compositionally biased region" description="Polar residues" evidence="2">
    <location>
        <begin position="151"/>
        <end position="160"/>
    </location>
</feature>
<feature type="compositionally biased region" description="Polar residues" evidence="2">
    <location>
        <begin position="168"/>
        <end position="182"/>
    </location>
</feature>
<feature type="compositionally biased region" description="Low complexity" evidence="2">
    <location>
        <begin position="190"/>
        <end position="225"/>
    </location>
</feature>
<protein>
    <recommendedName>
        <fullName evidence="1">Cytoskeleton protein RodZ</fullName>
    </recommendedName>
</protein>
<proteinExistence type="inferred from homology"/>
<keyword id="KW-0997">Cell inner membrane</keyword>
<keyword id="KW-1003">Cell membrane</keyword>
<keyword id="KW-0133">Cell shape</keyword>
<keyword id="KW-0238">DNA-binding</keyword>
<keyword id="KW-0472">Membrane</keyword>
<keyword id="KW-1185">Reference proteome</keyword>
<keyword id="KW-0735">Signal-anchor</keyword>
<keyword id="KW-0812">Transmembrane</keyword>
<keyword id="KW-1133">Transmembrane helix</keyword>
<accession>Q6D275</accession>
<name>RODZ_PECAS</name>
<organism>
    <name type="scientific">Pectobacterium atrosepticum (strain SCRI 1043 / ATCC BAA-672)</name>
    <name type="common">Erwinia carotovora subsp. atroseptica</name>
    <dbReference type="NCBI Taxonomy" id="218491"/>
    <lineage>
        <taxon>Bacteria</taxon>
        <taxon>Pseudomonadati</taxon>
        <taxon>Pseudomonadota</taxon>
        <taxon>Gammaproteobacteria</taxon>
        <taxon>Enterobacterales</taxon>
        <taxon>Pectobacteriaceae</taxon>
        <taxon>Pectobacterium</taxon>
    </lineage>
</organism>
<reference key="1">
    <citation type="journal article" date="2004" name="Proc. Natl. Acad. Sci. U.S.A.">
        <title>Genome sequence of the enterobacterial phytopathogen Erwinia carotovora subsp. atroseptica and characterization of virulence factors.</title>
        <authorList>
            <person name="Bell K.S."/>
            <person name="Sebaihia M."/>
            <person name="Pritchard L."/>
            <person name="Holden M.T.G."/>
            <person name="Hyman L.J."/>
            <person name="Holeva M.C."/>
            <person name="Thomson N.R."/>
            <person name="Bentley S.D."/>
            <person name="Churcher L.J.C."/>
            <person name="Mungall K."/>
            <person name="Atkin R."/>
            <person name="Bason N."/>
            <person name="Brooks K."/>
            <person name="Chillingworth T."/>
            <person name="Clark K."/>
            <person name="Doggett J."/>
            <person name="Fraser A."/>
            <person name="Hance Z."/>
            <person name="Hauser H."/>
            <person name="Jagels K."/>
            <person name="Moule S."/>
            <person name="Norbertczak H."/>
            <person name="Ormond D."/>
            <person name="Price C."/>
            <person name="Quail M.A."/>
            <person name="Sanders M."/>
            <person name="Walker D."/>
            <person name="Whitehead S."/>
            <person name="Salmond G.P.C."/>
            <person name="Birch P.R.J."/>
            <person name="Parkhill J."/>
            <person name="Toth I.K."/>
        </authorList>
    </citation>
    <scope>NUCLEOTIDE SEQUENCE [LARGE SCALE GENOMIC DNA]</scope>
    <source>
        <strain>SCRI 1043 / ATCC BAA-672</strain>
    </source>
</reference>
<comment type="function">
    <text evidence="1">Cytoskeletal protein that is involved in cell-shape control through regulation of the length of the long axis.</text>
</comment>
<comment type="subcellular location">
    <subcellularLocation>
        <location evidence="1">Cell inner membrane</location>
        <topology evidence="1">Single-pass type II membrane protein</topology>
    </subcellularLocation>
    <text evidence="1">Forms helical filaments along the long axis of the cell.</text>
</comment>
<comment type="domain">
    <text evidence="1">The helix-turn-helix (HTH) motif in the cytoplasmic domain of the N-terminus is involved in the formation of spirals to maintain the rigid rod shape. As this protein is anchored in the cytoplasmic membrane, the HTH motif may contribute to protein-protein interactions to form the RodZ helix, which is localized beneath the cytoplasmic membrane. The C-terminal domain may be critical for determination of the rod shape by probably interacting with enzymes required for synthesis of the peptidoglycan layer, including PBPs in the periplasm.</text>
</comment>
<comment type="similarity">
    <text evidence="1">Belongs to the RodZ family.</text>
</comment>
<evidence type="ECO:0000255" key="1">
    <source>
        <dbReference type="HAMAP-Rule" id="MF_02017"/>
    </source>
</evidence>
<evidence type="ECO:0000256" key="2">
    <source>
        <dbReference type="SAM" id="MobiDB-lite"/>
    </source>
</evidence>